<comment type="function">
    <text evidence="1">One of the primary rRNA binding proteins, it binds directly near the 3'-end of the 23S rRNA, where it nucleates assembly of the 50S subunit.</text>
</comment>
<comment type="subunit">
    <text evidence="1">Part of the 50S ribosomal subunit. Forms a cluster with proteins L14 and L19.</text>
</comment>
<comment type="PTM">
    <text evidence="1">Methylated by PrmB.</text>
</comment>
<comment type="similarity">
    <text evidence="1">Belongs to the universal ribosomal protein uL3 family.</text>
</comment>
<organism>
    <name type="scientific">Nitrobacter winogradskyi (strain ATCC 25391 / DSM 10237 / CIP 104748 / NCIMB 11846 / Nb-255)</name>
    <dbReference type="NCBI Taxonomy" id="323098"/>
    <lineage>
        <taxon>Bacteria</taxon>
        <taxon>Pseudomonadati</taxon>
        <taxon>Pseudomonadota</taxon>
        <taxon>Alphaproteobacteria</taxon>
        <taxon>Hyphomicrobiales</taxon>
        <taxon>Nitrobacteraceae</taxon>
        <taxon>Nitrobacter</taxon>
    </lineage>
</organism>
<gene>
    <name evidence="1" type="primary">rplC</name>
    <name type="ordered locus">Nwi_1364</name>
</gene>
<sequence length="247" mass="26263">MRSGVIAQKVGMTRVFTEAGEHIPVTVLKLSNCQVLGHRTSEKNGYVALQLGSGARKTVYMPKAERGQFAVAKVAPKRKVAEFRVSEDSLIPVGAEIQADHFVVGQFVDVTGTSVGKGYAGGMKRWNFGGLRATHGVSISHRSIGSTGGRQDPGKTFKNKKMPGHMGVDRITTLNLRVVQTDVERGLILVEGAVPGSKGGWIAVRDAVKKPLPKEAPKPGKFKVVGDAQAVDEDKAPADTPAEKEGA</sequence>
<keyword id="KW-0488">Methylation</keyword>
<keyword id="KW-1185">Reference proteome</keyword>
<keyword id="KW-0687">Ribonucleoprotein</keyword>
<keyword id="KW-0689">Ribosomal protein</keyword>
<keyword id="KW-0694">RNA-binding</keyword>
<keyword id="KW-0699">rRNA-binding</keyword>
<reference key="1">
    <citation type="journal article" date="2006" name="Appl. Environ. Microbiol.">
        <title>Genome sequence of the chemolithoautotrophic nitrite-oxidizing bacterium Nitrobacter winogradskyi Nb-255.</title>
        <authorList>
            <person name="Starkenburg S.R."/>
            <person name="Chain P.S.G."/>
            <person name="Sayavedra-Soto L.A."/>
            <person name="Hauser L."/>
            <person name="Land M.L."/>
            <person name="Larimer F.W."/>
            <person name="Malfatti S.A."/>
            <person name="Klotz M.G."/>
            <person name="Bottomley P.J."/>
            <person name="Arp D.J."/>
            <person name="Hickey W.J."/>
        </authorList>
    </citation>
    <scope>NUCLEOTIDE SEQUENCE [LARGE SCALE GENOMIC DNA]</scope>
    <source>
        <strain>ATCC 25391 / DSM 10237 / CIP 104748 / NCIMB 11846 / Nb-255</strain>
    </source>
</reference>
<proteinExistence type="inferred from homology"/>
<name>RL3_NITWN</name>
<dbReference type="EMBL" id="CP000115">
    <property type="protein sequence ID" value="ABA04625.1"/>
    <property type="molecule type" value="Genomic_DNA"/>
</dbReference>
<dbReference type="RefSeq" id="WP_011314641.1">
    <property type="nucleotide sequence ID" value="NC_007406.1"/>
</dbReference>
<dbReference type="SMR" id="Q3SSW6"/>
<dbReference type="STRING" id="323098.Nwi_1364"/>
<dbReference type="KEGG" id="nwi:Nwi_1364"/>
<dbReference type="eggNOG" id="COG0087">
    <property type="taxonomic scope" value="Bacteria"/>
</dbReference>
<dbReference type="HOGENOM" id="CLU_044142_2_0_5"/>
<dbReference type="OrthoDB" id="9806135at2"/>
<dbReference type="Proteomes" id="UP000002531">
    <property type="component" value="Chromosome"/>
</dbReference>
<dbReference type="GO" id="GO:0022625">
    <property type="term" value="C:cytosolic large ribosomal subunit"/>
    <property type="evidence" value="ECO:0007669"/>
    <property type="project" value="TreeGrafter"/>
</dbReference>
<dbReference type="GO" id="GO:0019843">
    <property type="term" value="F:rRNA binding"/>
    <property type="evidence" value="ECO:0007669"/>
    <property type="project" value="UniProtKB-UniRule"/>
</dbReference>
<dbReference type="GO" id="GO:0003735">
    <property type="term" value="F:structural constituent of ribosome"/>
    <property type="evidence" value="ECO:0007669"/>
    <property type="project" value="InterPro"/>
</dbReference>
<dbReference type="GO" id="GO:0006412">
    <property type="term" value="P:translation"/>
    <property type="evidence" value="ECO:0007669"/>
    <property type="project" value="UniProtKB-UniRule"/>
</dbReference>
<dbReference type="FunFam" id="2.40.30.10:FF:000004">
    <property type="entry name" value="50S ribosomal protein L3"/>
    <property type="match status" value="1"/>
</dbReference>
<dbReference type="FunFam" id="3.30.160.810:FF:000001">
    <property type="entry name" value="50S ribosomal protein L3"/>
    <property type="match status" value="1"/>
</dbReference>
<dbReference type="Gene3D" id="3.30.160.810">
    <property type="match status" value="1"/>
</dbReference>
<dbReference type="Gene3D" id="2.40.30.10">
    <property type="entry name" value="Translation factors"/>
    <property type="match status" value="1"/>
</dbReference>
<dbReference type="HAMAP" id="MF_01325_B">
    <property type="entry name" value="Ribosomal_uL3_B"/>
    <property type="match status" value="1"/>
</dbReference>
<dbReference type="InterPro" id="IPR000597">
    <property type="entry name" value="Ribosomal_uL3"/>
</dbReference>
<dbReference type="InterPro" id="IPR019927">
    <property type="entry name" value="Ribosomal_uL3_bac/org-type"/>
</dbReference>
<dbReference type="InterPro" id="IPR019926">
    <property type="entry name" value="Ribosomal_uL3_CS"/>
</dbReference>
<dbReference type="InterPro" id="IPR009000">
    <property type="entry name" value="Transl_B-barrel_sf"/>
</dbReference>
<dbReference type="NCBIfam" id="TIGR03625">
    <property type="entry name" value="L3_bact"/>
    <property type="match status" value="1"/>
</dbReference>
<dbReference type="PANTHER" id="PTHR11229">
    <property type="entry name" value="50S RIBOSOMAL PROTEIN L3"/>
    <property type="match status" value="1"/>
</dbReference>
<dbReference type="PANTHER" id="PTHR11229:SF16">
    <property type="entry name" value="LARGE RIBOSOMAL SUBUNIT PROTEIN UL3C"/>
    <property type="match status" value="1"/>
</dbReference>
<dbReference type="Pfam" id="PF00297">
    <property type="entry name" value="Ribosomal_L3"/>
    <property type="match status" value="1"/>
</dbReference>
<dbReference type="SUPFAM" id="SSF50447">
    <property type="entry name" value="Translation proteins"/>
    <property type="match status" value="1"/>
</dbReference>
<dbReference type="PROSITE" id="PS00474">
    <property type="entry name" value="RIBOSOMAL_L3"/>
    <property type="match status" value="1"/>
</dbReference>
<accession>Q3SSW6</accession>
<evidence type="ECO:0000255" key="1">
    <source>
        <dbReference type="HAMAP-Rule" id="MF_01325"/>
    </source>
</evidence>
<evidence type="ECO:0000256" key="2">
    <source>
        <dbReference type="SAM" id="MobiDB-lite"/>
    </source>
</evidence>
<evidence type="ECO:0000305" key="3"/>
<protein>
    <recommendedName>
        <fullName evidence="1">Large ribosomal subunit protein uL3</fullName>
    </recommendedName>
    <alternativeName>
        <fullName evidence="3">50S ribosomal protein L3</fullName>
    </alternativeName>
</protein>
<feature type="chain" id="PRO_0000241375" description="Large ribosomal subunit protein uL3">
    <location>
        <begin position="1"/>
        <end position="247"/>
    </location>
</feature>
<feature type="region of interest" description="Disordered" evidence="2">
    <location>
        <begin position="140"/>
        <end position="164"/>
    </location>
</feature>
<feature type="region of interest" description="Disordered" evidence="2">
    <location>
        <begin position="212"/>
        <end position="247"/>
    </location>
</feature>
<feature type="compositionally biased region" description="Basic and acidic residues" evidence="2">
    <location>
        <begin position="232"/>
        <end position="247"/>
    </location>
</feature>
<feature type="modified residue" description="N5-methylglutamine" evidence="1">
    <location>
        <position position="151"/>
    </location>
</feature>